<keyword id="KW-0030">Aminoacyl-tRNA synthetase</keyword>
<keyword id="KW-0067">ATP-binding</keyword>
<keyword id="KW-0963">Cytoplasm</keyword>
<keyword id="KW-0436">Ligase</keyword>
<keyword id="KW-0460">Magnesium</keyword>
<keyword id="KW-0479">Metal-binding</keyword>
<keyword id="KW-0547">Nucleotide-binding</keyword>
<keyword id="KW-0648">Protein biosynthesis</keyword>
<keyword id="KW-1185">Reference proteome</keyword>
<proteinExistence type="inferred from homology"/>
<name>SYFA_STRCO</name>
<reference key="1">
    <citation type="journal article" date="2002" name="Nature">
        <title>Complete genome sequence of the model actinomycete Streptomyces coelicolor A3(2).</title>
        <authorList>
            <person name="Bentley S.D."/>
            <person name="Chater K.F."/>
            <person name="Cerdeno-Tarraga A.-M."/>
            <person name="Challis G.L."/>
            <person name="Thomson N.R."/>
            <person name="James K.D."/>
            <person name="Harris D.E."/>
            <person name="Quail M.A."/>
            <person name="Kieser H."/>
            <person name="Harper D."/>
            <person name="Bateman A."/>
            <person name="Brown S."/>
            <person name="Chandra G."/>
            <person name="Chen C.W."/>
            <person name="Collins M."/>
            <person name="Cronin A."/>
            <person name="Fraser A."/>
            <person name="Goble A."/>
            <person name="Hidalgo J."/>
            <person name="Hornsby T."/>
            <person name="Howarth S."/>
            <person name="Huang C.-H."/>
            <person name="Kieser T."/>
            <person name="Larke L."/>
            <person name="Murphy L.D."/>
            <person name="Oliver K."/>
            <person name="O'Neil S."/>
            <person name="Rabbinowitsch E."/>
            <person name="Rajandream M.A."/>
            <person name="Rutherford K.M."/>
            <person name="Rutter S."/>
            <person name="Seeger K."/>
            <person name="Saunders D."/>
            <person name="Sharp S."/>
            <person name="Squares R."/>
            <person name="Squares S."/>
            <person name="Taylor K."/>
            <person name="Warren T."/>
            <person name="Wietzorrek A."/>
            <person name="Woodward J.R."/>
            <person name="Barrell B.G."/>
            <person name="Parkhill J."/>
            <person name="Hopwood D.A."/>
        </authorList>
    </citation>
    <scope>NUCLEOTIDE SEQUENCE [LARGE SCALE GENOMIC DNA]</scope>
    <source>
        <strain>ATCC BAA-471 / A3(2) / M145</strain>
    </source>
</reference>
<organism>
    <name type="scientific">Streptomyces coelicolor (strain ATCC BAA-471 / A3(2) / M145)</name>
    <dbReference type="NCBI Taxonomy" id="100226"/>
    <lineage>
        <taxon>Bacteria</taxon>
        <taxon>Bacillati</taxon>
        <taxon>Actinomycetota</taxon>
        <taxon>Actinomycetes</taxon>
        <taxon>Kitasatosporales</taxon>
        <taxon>Streptomycetaceae</taxon>
        <taxon>Streptomyces</taxon>
        <taxon>Streptomyces albidoflavus group</taxon>
    </lineage>
</organism>
<sequence length="358" mass="39119">MKPEEIERMRDEALAAFAAADSLDALQEAKVAHTGGASPLALANREIGALPPQAKAEAGKRVGMARGAVNKALAARQEELEAERDARVLVEEAVDVTLPHDRVPAGARHPLTTLSERIEDIFVAMGYEVAEGPEAEAEWFNFDALNIGPDHPARGEADTFFVQGPEGGAESGVVLRTHTSPVQIRSALTRELPVYVICPGRVYRTDELDATHTPVFHQVELLAVDEGLTMADLKGTLDHMVQSLFGAEMKTRLRPNFFPFTEPSAEMDMLCYVCKGASVGNPDRPCRTCSSEGWIELGGCGMVNPRVLTACGIDPEKYSGFAFGFGIERMLMFRHNVEDMRDMVEGDVRFTRPFGMEI</sequence>
<comment type="catalytic activity">
    <reaction>
        <text>tRNA(Phe) + L-phenylalanine + ATP = L-phenylalanyl-tRNA(Phe) + AMP + diphosphate + H(+)</text>
        <dbReference type="Rhea" id="RHEA:19413"/>
        <dbReference type="Rhea" id="RHEA-COMP:9668"/>
        <dbReference type="Rhea" id="RHEA-COMP:9699"/>
        <dbReference type="ChEBI" id="CHEBI:15378"/>
        <dbReference type="ChEBI" id="CHEBI:30616"/>
        <dbReference type="ChEBI" id="CHEBI:33019"/>
        <dbReference type="ChEBI" id="CHEBI:58095"/>
        <dbReference type="ChEBI" id="CHEBI:78442"/>
        <dbReference type="ChEBI" id="CHEBI:78531"/>
        <dbReference type="ChEBI" id="CHEBI:456215"/>
        <dbReference type="EC" id="6.1.1.20"/>
    </reaction>
</comment>
<comment type="cofactor">
    <cofactor evidence="1">
        <name>Mg(2+)</name>
        <dbReference type="ChEBI" id="CHEBI:18420"/>
    </cofactor>
    <text evidence="1">Binds 2 magnesium ions per tetramer.</text>
</comment>
<comment type="subunit">
    <text evidence="1">Tetramer of two alpha and two beta subunits.</text>
</comment>
<comment type="subcellular location">
    <subcellularLocation>
        <location evidence="1">Cytoplasm</location>
    </subcellularLocation>
</comment>
<comment type="similarity">
    <text evidence="2">Belongs to the class-II aminoacyl-tRNA synthetase family. Phe-tRNA synthetase alpha subunit type 1 subfamily.</text>
</comment>
<comment type="sequence caution" evidence="2">
    <conflict type="erroneous initiation">
        <sequence resource="EMBL-CDS" id="CAA20806"/>
    </conflict>
</comment>
<feature type="chain" id="PRO_0000126771" description="Phenylalanine--tRNA ligase alpha subunit">
    <location>
        <begin position="1"/>
        <end position="358"/>
    </location>
</feature>
<feature type="binding site" evidence="1">
    <location>
        <position position="262"/>
    </location>
    <ligand>
        <name>Mg(2+)</name>
        <dbReference type="ChEBI" id="CHEBI:18420"/>
        <note>shared with beta subunit</note>
    </ligand>
</feature>
<protein>
    <recommendedName>
        <fullName>Phenylalanine--tRNA ligase alpha subunit</fullName>
        <ecNumber>6.1.1.20</ecNumber>
    </recommendedName>
    <alternativeName>
        <fullName>Phenylalanyl-tRNA synthetase alpha subunit</fullName>
        <shortName>PheRS</shortName>
    </alternativeName>
</protein>
<evidence type="ECO:0000250" key="1"/>
<evidence type="ECO:0000305" key="2"/>
<accession>O88055</accession>
<gene>
    <name type="primary">pheS</name>
    <name type="ordered locus">SCO1595</name>
    <name type="ORF">SCI35.17c</name>
</gene>
<dbReference type="EC" id="6.1.1.20"/>
<dbReference type="EMBL" id="AL939109">
    <property type="protein sequence ID" value="CAA20806.1"/>
    <property type="status" value="ALT_INIT"/>
    <property type="molecule type" value="Genomic_DNA"/>
</dbReference>
<dbReference type="PIR" id="T36830">
    <property type="entry name" value="T36830"/>
</dbReference>
<dbReference type="RefSeq" id="NP_625871.2">
    <property type="nucleotide sequence ID" value="NC_003888.3"/>
</dbReference>
<dbReference type="SMR" id="O88055"/>
<dbReference type="FunCoup" id="O88055">
    <property type="interactions" value="467"/>
</dbReference>
<dbReference type="STRING" id="100226.gene:17759188"/>
<dbReference type="PaxDb" id="100226-SCO1595"/>
<dbReference type="KEGG" id="sco:SCO1595"/>
<dbReference type="PATRIC" id="fig|100226.15.peg.1607"/>
<dbReference type="eggNOG" id="COG0016">
    <property type="taxonomic scope" value="Bacteria"/>
</dbReference>
<dbReference type="HOGENOM" id="CLU_025086_0_1_11"/>
<dbReference type="InParanoid" id="O88055"/>
<dbReference type="OrthoDB" id="9800719at2"/>
<dbReference type="PhylomeDB" id="O88055"/>
<dbReference type="Proteomes" id="UP000001973">
    <property type="component" value="Chromosome"/>
</dbReference>
<dbReference type="GO" id="GO:0005737">
    <property type="term" value="C:cytoplasm"/>
    <property type="evidence" value="ECO:0000318"/>
    <property type="project" value="GO_Central"/>
</dbReference>
<dbReference type="GO" id="GO:0005524">
    <property type="term" value="F:ATP binding"/>
    <property type="evidence" value="ECO:0007669"/>
    <property type="project" value="UniProtKB-UniRule"/>
</dbReference>
<dbReference type="GO" id="GO:0000287">
    <property type="term" value="F:magnesium ion binding"/>
    <property type="evidence" value="ECO:0007669"/>
    <property type="project" value="UniProtKB-UniRule"/>
</dbReference>
<dbReference type="GO" id="GO:0004826">
    <property type="term" value="F:phenylalanine-tRNA ligase activity"/>
    <property type="evidence" value="ECO:0000318"/>
    <property type="project" value="GO_Central"/>
</dbReference>
<dbReference type="GO" id="GO:0000049">
    <property type="term" value="F:tRNA binding"/>
    <property type="evidence" value="ECO:0007669"/>
    <property type="project" value="InterPro"/>
</dbReference>
<dbReference type="GO" id="GO:0006432">
    <property type="term" value="P:phenylalanyl-tRNA aminoacylation"/>
    <property type="evidence" value="ECO:0000318"/>
    <property type="project" value="GO_Central"/>
</dbReference>
<dbReference type="CDD" id="cd00496">
    <property type="entry name" value="PheRS_alpha_core"/>
    <property type="match status" value="1"/>
</dbReference>
<dbReference type="FunFam" id="3.30.930.10:FF:000003">
    <property type="entry name" value="Phenylalanine--tRNA ligase alpha subunit"/>
    <property type="match status" value="1"/>
</dbReference>
<dbReference type="Gene3D" id="3.30.930.10">
    <property type="entry name" value="Bira Bifunctional Protein, Domain 2"/>
    <property type="match status" value="1"/>
</dbReference>
<dbReference type="HAMAP" id="MF_00281">
    <property type="entry name" value="Phe_tRNA_synth_alpha1"/>
    <property type="match status" value="1"/>
</dbReference>
<dbReference type="InterPro" id="IPR006195">
    <property type="entry name" value="aa-tRNA-synth_II"/>
</dbReference>
<dbReference type="InterPro" id="IPR045864">
    <property type="entry name" value="aa-tRNA-synth_II/BPL/LPL"/>
</dbReference>
<dbReference type="InterPro" id="IPR004529">
    <property type="entry name" value="Phe-tRNA-synth_IIc_asu"/>
</dbReference>
<dbReference type="InterPro" id="IPR004188">
    <property type="entry name" value="Phe-tRNA_ligase_II_N"/>
</dbReference>
<dbReference type="InterPro" id="IPR022911">
    <property type="entry name" value="Phe_tRNA_ligase_alpha1_bac"/>
</dbReference>
<dbReference type="InterPro" id="IPR002319">
    <property type="entry name" value="Phenylalanyl-tRNA_Synthase"/>
</dbReference>
<dbReference type="InterPro" id="IPR010978">
    <property type="entry name" value="tRNA-bd_arm"/>
</dbReference>
<dbReference type="NCBIfam" id="TIGR00468">
    <property type="entry name" value="pheS"/>
    <property type="match status" value="1"/>
</dbReference>
<dbReference type="PANTHER" id="PTHR11538:SF41">
    <property type="entry name" value="PHENYLALANINE--TRNA LIGASE, MITOCHONDRIAL"/>
    <property type="match status" value="1"/>
</dbReference>
<dbReference type="PANTHER" id="PTHR11538">
    <property type="entry name" value="PHENYLALANYL-TRNA SYNTHETASE"/>
    <property type="match status" value="1"/>
</dbReference>
<dbReference type="Pfam" id="PF02912">
    <property type="entry name" value="Phe_tRNA-synt_N"/>
    <property type="match status" value="1"/>
</dbReference>
<dbReference type="Pfam" id="PF01409">
    <property type="entry name" value="tRNA-synt_2d"/>
    <property type="match status" value="1"/>
</dbReference>
<dbReference type="SUPFAM" id="SSF55681">
    <property type="entry name" value="Class II aaRS and biotin synthetases"/>
    <property type="match status" value="1"/>
</dbReference>
<dbReference type="SUPFAM" id="SSF46589">
    <property type="entry name" value="tRNA-binding arm"/>
    <property type="match status" value="1"/>
</dbReference>
<dbReference type="PROSITE" id="PS50862">
    <property type="entry name" value="AA_TRNA_LIGASE_II"/>
    <property type="match status" value="1"/>
</dbReference>